<keyword id="KW-0007">Acetylation</keyword>
<keyword id="KW-0067">ATP-binding</keyword>
<keyword id="KW-0963">Cytoplasm</keyword>
<keyword id="KW-0324">Glycolysis</keyword>
<keyword id="KW-0418">Kinase</keyword>
<keyword id="KW-0547">Nucleotide-binding</keyword>
<keyword id="KW-1185">Reference proteome</keyword>
<keyword id="KW-0808">Transferase</keyword>
<accession>A7ZR34</accession>
<proteinExistence type="inferred from homology"/>
<evidence type="ECO:0000255" key="1">
    <source>
        <dbReference type="HAMAP-Rule" id="MF_00145"/>
    </source>
</evidence>
<protein>
    <recommendedName>
        <fullName evidence="1">Phosphoglycerate kinase</fullName>
        <ecNumber evidence="1">2.7.2.3</ecNumber>
    </recommendedName>
</protein>
<sequence length="387" mass="41118">MSVIKMTDLDLAGKRVFIRADLNVPVKDGKVTSDARIRASLPTIELALKQGAKVMVTSHLGRPTEGEYNEEFSLLPVVNYLKDKLSNPVRLVKDYLDGVDVAEGELVVLENVRFNKGEKKDDETLSKKYAALCDVFVMDAFGTAHRAQASTHGIGKFADVACAGPLLAAELDALGKALKEPARPMVAIVGGSKVSTKLTVLDSLSKIADQLIVGGGIANTFIAAQGHDVGKSLYEADLVDEAKRLLTTCNIPVPSDVRVATEFSETAPATLKSVNDVKADEQILDIGDASAQELAEILKNAKTILWNGPVGVFEFPNFRKGTEIVANAIADSEAFSIAGGGDTLAAIDLFGIADKISYISTGGGAFLEFVEGKVLPAVAMLEERAKK</sequence>
<gene>
    <name evidence="1" type="primary">pgk</name>
    <name type="ordered locus">EcE24377A_3254</name>
</gene>
<organism>
    <name type="scientific">Escherichia coli O139:H28 (strain E24377A / ETEC)</name>
    <dbReference type="NCBI Taxonomy" id="331111"/>
    <lineage>
        <taxon>Bacteria</taxon>
        <taxon>Pseudomonadati</taxon>
        <taxon>Pseudomonadota</taxon>
        <taxon>Gammaproteobacteria</taxon>
        <taxon>Enterobacterales</taxon>
        <taxon>Enterobacteriaceae</taxon>
        <taxon>Escherichia</taxon>
    </lineage>
</organism>
<reference key="1">
    <citation type="journal article" date="2008" name="J. Bacteriol.">
        <title>The pangenome structure of Escherichia coli: comparative genomic analysis of E. coli commensal and pathogenic isolates.</title>
        <authorList>
            <person name="Rasko D.A."/>
            <person name="Rosovitz M.J."/>
            <person name="Myers G.S.A."/>
            <person name="Mongodin E.F."/>
            <person name="Fricke W.F."/>
            <person name="Gajer P."/>
            <person name="Crabtree J."/>
            <person name="Sebaihia M."/>
            <person name="Thomson N.R."/>
            <person name="Chaudhuri R."/>
            <person name="Henderson I.R."/>
            <person name="Sperandio V."/>
            <person name="Ravel J."/>
        </authorList>
    </citation>
    <scope>NUCLEOTIDE SEQUENCE [LARGE SCALE GENOMIC DNA]</scope>
    <source>
        <strain>E24377A / ETEC</strain>
    </source>
</reference>
<feature type="chain" id="PRO_1000057982" description="Phosphoglycerate kinase">
    <location>
        <begin position="1"/>
        <end position="387"/>
    </location>
</feature>
<feature type="binding site" evidence="1">
    <location>
        <begin position="21"/>
        <end position="23"/>
    </location>
    <ligand>
        <name>substrate</name>
    </ligand>
</feature>
<feature type="binding site" evidence="1">
    <location>
        <position position="36"/>
    </location>
    <ligand>
        <name>substrate</name>
    </ligand>
</feature>
<feature type="binding site" evidence="1">
    <location>
        <begin position="59"/>
        <end position="62"/>
    </location>
    <ligand>
        <name>substrate</name>
    </ligand>
</feature>
<feature type="binding site" evidence="1">
    <location>
        <position position="113"/>
    </location>
    <ligand>
        <name>substrate</name>
    </ligand>
</feature>
<feature type="binding site" evidence="1">
    <location>
        <position position="146"/>
    </location>
    <ligand>
        <name>substrate</name>
    </ligand>
</feature>
<feature type="binding site" evidence="1">
    <location>
        <position position="197"/>
    </location>
    <ligand>
        <name>ATP</name>
        <dbReference type="ChEBI" id="CHEBI:30616"/>
    </ligand>
</feature>
<feature type="binding site" evidence="1">
    <location>
        <position position="314"/>
    </location>
    <ligand>
        <name>ATP</name>
        <dbReference type="ChEBI" id="CHEBI:30616"/>
    </ligand>
</feature>
<feature type="binding site" evidence="1">
    <location>
        <begin position="340"/>
        <end position="343"/>
    </location>
    <ligand>
        <name>ATP</name>
        <dbReference type="ChEBI" id="CHEBI:30616"/>
    </ligand>
</feature>
<feature type="modified residue" description="N6-acetyllysine" evidence="1">
    <location>
        <position position="84"/>
    </location>
</feature>
<dbReference type="EC" id="2.7.2.3" evidence="1"/>
<dbReference type="EMBL" id="CP000800">
    <property type="protein sequence ID" value="ABV19616.1"/>
    <property type="molecule type" value="Genomic_DNA"/>
</dbReference>
<dbReference type="RefSeq" id="WP_000111269.1">
    <property type="nucleotide sequence ID" value="NC_009801.1"/>
</dbReference>
<dbReference type="SMR" id="A7ZR34"/>
<dbReference type="GeneID" id="89517738"/>
<dbReference type="KEGG" id="ecw:EcE24377A_3254"/>
<dbReference type="HOGENOM" id="CLU_025427_0_2_6"/>
<dbReference type="UniPathway" id="UPA00109">
    <property type="reaction ID" value="UER00185"/>
</dbReference>
<dbReference type="Proteomes" id="UP000001122">
    <property type="component" value="Chromosome"/>
</dbReference>
<dbReference type="GO" id="GO:0005829">
    <property type="term" value="C:cytosol"/>
    <property type="evidence" value="ECO:0007669"/>
    <property type="project" value="TreeGrafter"/>
</dbReference>
<dbReference type="GO" id="GO:0043531">
    <property type="term" value="F:ADP binding"/>
    <property type="evidence" value="ECO:0007669"/>
    <property type="project" value="TreeGrafter"/>
</dbReference>
<dbReference type="GO" id="GO:0005524">
    <property type="term" value="F:ATP binding"/>
    <property type="evidence" value="ECO:0007669"/>
    <property type="project" value="UniProtKB-KW"/>
</dbReference>
<dbReference type="GO" id="GO:0004618">
    <property type="term" value="F:phosphoglycerate kinase activity"/>
    <property type="evidence" value="ECO:0007669"/>
    <property type="project" value="UniProtKB-UniRule"/>
</dbReference>
<dbReference type="GO" id="GO:0006094">
    <property type="term" value="P:gluconeogenesis"/>
    <property type="evidence" value="ECO:0007669"/>
    <property type="project" value="TreeGrafter"/>
</dbReference>
<dbReference type="GO" id="GO:0006096">
    <property type="term" value="P:glycolytic process"/>
    <property type="evidence" value="ECO:0007669"/>
    <property type="project" value="UniProtKB-UniRule"/>
</dbReference>
<dbReference type="CDD" id="cd00318">
    <property type="entry name" value="Phosphoglycerate_kinase"/>
    <property type="match status" value="1"/>
</dbReference>
<dbReference type="FunFam" id="3.40.50.1260:FF:000001">
    <property type="entry name" value="Phosphoglycerate kinase"/>
    <property type="match status" value="1"/>
</dbReference>
<dbReference type="FunFam" id="3.40.50.1260:FF:000002">
    <property type="entry name" value="Phosphoglycerate kinase"/>
    <property type="match status" value="1"/>
</dbReference>
<dbReference type="Gene3D" id="3.40.50.1260">
    <property type="entry name" value="Phosphoglycerate kinase, N-terminal domain"/>
    <property type="match status" value="2"/>
</dbReference>
<dbReference type="HAMAP" id="MF_00145">
    <property type="entry name" value="Phosphoglyc_kinase"/>
    <property type="match status" value="1"/>
</dbReference>
<dbReference type="InterPro" id="IPR001576">
    <property type="entry name" value="Phosphoglycerate_kinase"/>
</dbReference>
<dbReference type="InterPro" id="IPR015911">
    <property type="entry name" value="Phosphoglycerate_kinase_CS"/>
</dbReference>
<dbReference type="InterPro" id="IPR015824">
    <property type="entry name" value="Phosphoglycerate_kinase_N"/>
</dbReference>
<dbReference type="InterPro" id="IPR036043">
    <property type="entry name" value="Phosphoglycerate_kinase_sf"/>
</dbReference>
<dbReference type="PANTHER" id="PTHR11406">
    <property type="entry name" value="PHOSPHOGLYCERATE KINASE"/>
    <property type="match status" value="1"/>
</dbReference>
<dbReference type="PANTHER" id="PTHR11406:SF23">
    <property type="entry name" value="PHOSPHOGLYCERATE KINASE 1, CHLOROPLASTIC-RELATED"/>
    <property type="match status" value="1"/>
</dbReference>
<dbReference type="Pfam" id="PF00162">
    <property type="entry name" value="PGK"/>
    <property type="match status" value="1"/>
</dbReference>
<dbReference type="PIRSF" id="PIRSF000724">
    <property type="entry name" value="Pgk"/>
    <property type="match status" value="1"/>
</dbReference>
<dbReference type="PRINTS" id="PR00477">
    <property type="entry name" value="PHGLYCKINASE"/>
</dbReference>
<dbReference type="SUPFAM" id="SSF53748">
    <property type="entry name" value="Phosphoglycerate kinase"/>
    <property type="match status" value="1"/>
</dbReference>
<dbReference type="PROSITE" id="PS00111">
    <property type="entry name" value="PGLYCERATE_KINASE"/>
    <property type="match status" value="1"/>
</dbReference>
<comment type="catalytic activity">
    <reaction evidence="1">
        <text>(2R)-3-phosphoglycerate + ATP = (2R)-3-phospho-glyceroyl phosphate + ADP</text>
        <dbReference type="Rhea" id="RHEA:14801"/>
        <dbReference type="ChEBI" id="CHEBI:30616"/>
        <dbReference type="ChEBI" id="CHEBI:57604"/>
        <dbReference type="ChEBI" id="CHEBI:58272"/>
        <dbReference type="ChEBI" id="CHEBI:456216"/>
        <dbReference type="EC" id="2.7.2.3"/>
    </reaction>
</comment>
<comment type="pathway">
    <text evidence="1">Carbohydrate degradation; glycolysis; pyruvate from D-glyceraldehyde 3-phosphate: step 2/5.</text>
</comment>
<comment type="subunit">
    <text evidence="1">Monomer.</text>
</comment>
<comment type="subcellular location">
    <subcellularLocation>
        <location evidence="1">Cytoplasm</location>
    </subcellularLocation>
</comment>
<comment type="similarity">
    <text evidence="1">Belongs to the phosphoglycerate kinase family.</text>
</comment>
<name>PGK_ECO24</name>